<accession>Q88CT3</accession>
<proteinExistence type="evidence at protein level"/>
<feature type="chain" id="PRO_0000155738" description="Homoserine O-succinyltransferase">
    <location>
        <begin position="1"/>
        <end position="379"/>
    </location>
</feature>
<feature type="domain" description="AB hydrolase-1" evidence="1">
    <location>
        <begin position="51"/>
        <end position="360"/>
    </location>
</feature>
<feature type="active site" description="Nucleophile" evidence="1">
    <location>
        <position position="157"/>
    </location>
</feature>
<feature type="active site" evidence="1">
    <location>
        <position position="323"/>
    </location>
</feature>
<feature type="active site" evidence="1">
    <location>
        <position position="356"/>
    </location>
</feature>
<feature type="binding site" evidence="1">
    <location>
        <position position="227"/>
    </location>
    <ligand>
        <name>substrate</name>
    </ligand>
</feature>
<feature type="binding site" evidence="1">
    <location>
        <position position="357"/>
    </location>
    <ligand>
        <name>substrate</name>
    </ligand>
</feature>
<feature type="site" description="Important for acyl-CoA specificity" evidence="1 4">
    <location>
        <position position="325"/>
    </location>
</feature>
<organism>
    <name type="scientific">Pseudomonas putida (strain ATCC 47054 / DSM 6125 / CFBP 8728 / NCIMB 11950 / KT2440)</name>
    <dbReference type="NCBI Taxonomy" id="160488"/>
    <lineage>
        <taxon>Bacteria</taxon>
        <taxon>Pseudomonadati</taxon>
        <taxon>Pseudomonadota</taxon>
        <taxon>Gammaproteobacteria</taxon>
        <taxon>Pseudomonadales</taxon>
        <taxon>Pseudomonadaceae</taxon>
        <taxon>Pseudomonas</taxon>
    </lineage>
</organism>
<name>METXS_PSEPK</name>
<comment type="function">
    <text evidence="1 2">Transfers a succinyl group from succinyl-CoA to L-homoserine, forming succinyl-L-homoserine.</text>
</comment>
<comment type="catalytic activity">
    <reaction evidence="1 2">
        <text>L-homoserine + succinyl-CoA = O-succinyl-L-homoserine + CoA</text>
        <dbReference type="Rhea" id="RHEA:22008"/>
        <dbReference type="ChEBI" id="CHEBI:57287"/>
        <dbReference type="ChEBI" id="CHEBI:57292"/>
        <dbReference type="ChEBI" id="CHEBI:57476"/>
        <dbReference type="ChEBI" id="CHEBI:57661"/>
        <dbReference type="EC" id="2.3.1.46"/>
    </reaction>
</comment>
<comment type="activity regulation">
    <text evidence="2">Requires MetW for activity.</text>
</comment>
<comment type="pathway">
    <text evidence="1">Amino-acid biosynthesis; L-methionine biosynthesis via de novo pathway; O-succinyl-L-homoserine from L-homoserine: step 1/1.</text>
</comment>
<comment type="subunit">
    <text evidence="1">Homodimer.</text>
</comment>
<comment type="subcellular location">
    <subcellularLocation>
        <location evidence="1">Cytoplasm</location>
    </subcellularLocation>
</comment>
<comment type="similarity">
    <text evidence="1">Belongs to the AB hydrolase superfamily. MetX family.</text>
</comment>
<keyword id="KW-0012">Acyltransferase</keyword>
<keyword id="KW-0028">Amino-acid biosynthesis</keyword>
<keyword id="KW-0963">Cytoplasm</keyword>
<keyword id="KW-0486">Methionine biosynthesis</keyword>
<keyword id="KW-1185">Reference proteome</keyword>
<keyword id="KW-0808">Transferase</keyword>
<protein>
    <recommendedName>
        <fullName evidence="1">Homoserine O-succinyltransferase</fullName>
        <shortName evidence="1 3">HST</shortName>
        <ecNumber evidence="1 2">2.3.1.46</ecNumber>
    </recommendedName>
    <alternativeName>
        <fullName evidence="1">Homoserine transsuccinylase</fullName>
        <shortName evidence="1">HTS</shortName>
    </alternativeName>
</protein>
<dbReference type="EC" id="2.3.1.46" evidence="1 2"/>
<dbReference type="EMBL" id="AE015451">
    <property type="protein sequence ID" value="AAN70662.1"/>
    <property type="molecule type" value="Genomic_DNA"/>
</dbReference>
<dbReference type="RefSeq" id="NP_747198.1">
    <property type="nucleotide sequence ID" value="NC_002947.4"/>
</dbReference>
<dbReference type="SMR" id="Q88CT3"/>
<dbReference type="STRING" id="160488.PP_5097"/>
<dbReference type="ESTHER" id="psepu-METX">
    <property type="family name" value="Homoserine_transacetylase"/>
</dbReference>
<dbReference type="PaxDb" id="160488-PP_5097"/>
<dbReference type="KEGG" id="ppu:PP_5097"/>
<dbReference type="PATRIC" id="fig|160488.4.peg.5440"/>
<dbReference type="eggNOG" id="COG2021">
    <property type="taxonomic scope" value="Bacteria"/>
</dbReference>
<dbReference type="HOGENOM" id="CLU_028760_1_2_6"/>
<dbReference type="OrthoDB" id="9800754at2"/>
<dbReference type="PhylomeDB" id="Q88CT3"/>
<dbReference type="BioCyc" id="PPUT160488:G1G01-5441-MONOMER"/>
<dbReference type="UniPathway" id="UPA00051">
    <property type="reaction ID" value="UER00075"/>
</dbReference>
<dbReference type="Proteomes" id="UP000000556">
    <property type="component" value="Chromosome"/>
</dbReference>
<dbReference type="GO" id="GO:0005737">
    <property type="term" value="C:cytoplasm"/>
    <property type="evidence" value="ECO:0007669"/>
    <property type="project" value="UniProtKB-SubCell"/>
</dbReference>
<dbReference type="GO" id="GO:0004414">
    <property type="term" value="F:homoserine O-acetyltransferase activity"/>
    <property type="evidence" value="ECO:0007669"/>
    <property type="project" value="TreeGrafter"/>
</dbReference>
<dbReference type="GO" id="GO:0008899">
    <property type="term" value="F:homoserine O-succinyltransferase activity"/>
    <property type="evidence" value="ECO:0007669"/>
    <property type="project" value="UniProtKB-UniRule"/>
</dbReference>
<dbReference type="GO" id="GO:0009092">
    <property type="term" value="P:homoserine metabolic process"/>
    <property type="evidence" value="ECO:0007669"/>
    <property type="project" value="TreeGrafter"/>
</dbReference>
<dbReference type="GO" id="GO:0009086">
    <property type="term" value="P:methionine biosynthetic process"/>
    <property type="evidence" value="ECO:0007669"/>
    <property type="project" value="UniProtKB-UniRule"/>
</dbReference>
<dbReference type="FunFam" id="1.10.1740.110:FF:000001">
    <property type="entry name" value="Homoserine O-acetyltransferase"/>
    <property type="match status" value="1"/>
</dbReference>
<dbReference type="Gene3D" id="1.10.1740.110">
    <property type="match status" value="1"/>
</dbReference>
<dbReference type="Gene3D" id="3.40.50.1820">
    <property type="entry name" value="alpha/beta hydrolase"/>
    <property type="match status" value="1"/>
</dbReference>
<dbReference type="HAMAP" id="MF_00296">
    <property type="entry name" value="MetX_acyltransf"/>
    <property type="match status" value="1"/>
</dbReference>
<dbReference type="InterPro" id="IPR000073">
    <property type="entry name" value="AB_hydrolase_1"/>
</dbReference>
<dbReference type="InterPro" id="IPR029058">
    <property type="entry name" value="AB_hydrolase_fold"/>
</dbReference>
<dbReference type="InterPro" id="IPR008220">
    <property type="entry name" value="HAT_MetX-like"/>
</dbReference>
<dbReference type="NCBIfam" id="TIGR01392">
    <property type="entry name" value="homoserO_Ac_trn"/>
    <property type="match status" value="1"/>
</dbReference>
<dbReference type="NCBIfam" id="NF001209">
    <property type="entry name" value="PRK00175.1"/>
    <property type="match status" value="1"/>
</dbReference>
<dbReference type="PANTHER" id="PTHR32268">
    <property type="entry name" value="HOMOSERINE O-ACETYLTRANSFERASE"/>
    <property type="match status" value="1"/>
</dbReference>
<dbReference type="PANTHER" id="PTHR32268:SF11">
    <property type="entry name" value="HOMOSERINE O-ACETYLTRANSFERASE"/>
    <property type="match status" value="1"/>
</dbReference>
<dbReference type="Pfam" id="PF00561">
    <property type="entry name" value="Abhydrolase_1"/>
    <property type="match status" value="1"/>
</dbReference>
<dbReference type="PIRSF" id="PIRSF000443">
    <property type="entry name" value="Homoser_Ac_trans"/>
    <property type="match status" value="1"/>
</dbReference>
<dbReference type="SUPFAM" id="SSF53474">
    <property type="entry name" value="alpha/beta-Hydrolases"/>
    <property type="match status" value="1"/>
</dbReference>
<evidence type="ECO:0000255" key="1">
    <source>
        <dbReference type="HAMAP-Rule" id="MF_00296"/>
    </source>
</evidence>
<evidence type="ECO:0000269" key="2">
    <source>
    </source>
</evidence>
<evidence type="ECO:0000303" key="3">
    <source>
    </source>
</evidence>
<evidence type="ECO:0000305" key="4">
    <source>
    </source>
</evidence>
<gene>
    <name evidence="1 3" type="primary">metXS</name>
    <name type="ordered locus">PP_5097</name>
</gene>
<reference key="1">
    <citation type="journal article" date="2002" name="Environ. Microbiol.">
        <title>Complete genome sequence and comparative analysis of the metabolically versatile Pseudomonas putida KT2440.</title>
        <authorList>
            <person name="Nelson K.E."/>
            <person name="Weinel C."/>
            <person name="Paulsen I.T."/>
            <person name="Dodson R.J."/>
            <person name="Hilbert H."/>
            <person name="Martins dos Santos V.A.P."/>
            <person name="Fouts D.E."/>
            <person name="Gill S.R."/>
            <person name="Pop M."/>
            <person name="Holmes M."/>
            <person name="Brinkac L.M."/>
            <person name="Beanan M.J."/>
            <person name="DeBoy R.T."/>
            <person name="Daugherty S.C."/>
            <person name="Kolonay J.F."/>
            <person name="Madupu R."/>
            <person name="Nelson W.C."/>
            <person name="White O."/>
            <person name="Peterson J.D."/>
            <person name="Khouri H.M."/>
            <person name="Hance I."/>
            <person name="Chris Lee P."/>
            <person name="Holtzapple E.K."/>
            <person name="Scanlan D."/>
            <person name="Tran K."/>
            <person name="Moazzez A."/>
            <person name="Utterback T.R."/>
            <person name="Rizzo M."/>
            <person name="Lee K."/>
            <person name="Kosack D."/>
            <person name="Moestl D."/>
            <person name="Wedler H."/>
            <person name="Lauber J."/>
            <person name="Stjepandic D."/>
            <person name="Hoheisel J."/>
            <person name="Straetz M."/>
            <person name="Heim S."/>
            <person name="Kiewitz C."/>
            <person name="Eisen J.A."/>
            <person name="Timmis K.N."/>
            <person name="Duesterhoeft A."/>
            <person name="Tuemmler B."/>
            <person name="Fraser C.M."/>
        </authorList>
    </citation>
    <scope>NUCLEOTIDE SEQUENCE [LARGE SCALE GENOMIC DNA]</scope>
    <source>
        <strain>ATCC 47054 / DSM 6125 / CFBP 8728 / NCIMB 11950 / KT2440</strain>
    </source>
</reference>
<reference key="2">
    <citation type="journal article" date="2017" name="Nat. Chem. Biol.">
        <title>Parallel evolution of non-homologous isofunctional enzymes in methionine biosynthesis.</title>
        <authorList>
            <person name="Bastard K."/>
            <person name="Perret A."/>
            <person name="Mariage A."/>
            <person name="Bessonnet T."/>
            <person name="Pinet-Turpault A."/>
            <person name="Petit J.L."/>
            <person name="Darii E."/>
            <person name="Bazire P."/>
            <person name="Vergne-Vaxelaire C."/>
            <person name="Brewee C."/>
            <person name="Debard A."/>
            <person name="Pellouin V."/>
            <person name="Besnard-Gonnet M."/>
            <person name="Artiguenave F."/>
            <person name="Medigue C."/>
            <person name="Vallenet D."/>
            <person name="Danchin A."/>
            <person name="Zaparucha A."/>
            <person name="Weissenbach J."/>
            <person name="Salanoubat M."/>
            <person name="de Berardinis V."/>
        </authorList>
    </citation>
    <scope>FUNCTION</scope>
    <scope>CATALYTIC ACTIVITY</scope>
    <scope>ACTIVITY REGULATION</scope>
</reference>
<sequence length="379" mass="41659">MSTVFPEDSVGLVVPQTARFDEPLALACGRSLASYELVYETYGTLNASASNAVLICHALSGHHHAAGYHAATDRKPGWWDSCIGPGKPIDTNRFFVVSLNNLGGCNGSTGPSSVNPATGKPYGADFPVLTVEDWVHSQVRLGERLGIQQWAAVVGGSLGGMQALQWTISYPERVRHCVDIASAPKLSAQNIAFNEVARQAILTDPEFHGGSFQDQGVIPKRGLMLARMVGHITYLSDDSMGEKFGRELKSDKLNYDFHSVEFQVESYLRYQGEEFSGRFDANTYLLMTKALDYFDPAATHGGDLAATLAHVTADYCIMSFTTDWRFSPARSREIVDALMAARKNVCYLEIDSPYGHDAFLIPTPRYMQGFSNYMNRIAI</sequence>